<proteinExistence type="evidence at protein level"/>
<evidence type="ECO:0000269" key="1">
    <source>
    </source>
</evidence>
<evidence type="ECO:0000269" key="2">
    <source>
    </source>
</evidence>
<evidence type="ECO:0000303" key="3">
    <source>
    </source>
</evidence>
<evidence type="ECO:0000303" key="4">
    <source>
    </source>
</evidence>
<evidence type="ECO:0000305" key="5"/>
<keyword id="KW-0134">Cell wall</keyword>
<keyword id="KW-0903">Direct protein sequencing</keyword>
<keyword id="KW-1185">Reference proteome</keyword>
<keyword id="KW-0964">Secreted</keyword>
<name>CWP38_TOBAC</name>
<comment type="subcellular location">
    <subcellularLocation>
        <location evidence="1 2">Secreted</location>
        <location evidence="1 2">Cell wall</location>
    </subcellularLocation>
</comment>
<accession>P82446</accession>
<accession>P80791</accession>
<protein>
    <recommendedName>
        <fullName>34 kDa cell wall protein</fullName>
    </recommendedName>
</protein>
<dbReference type="PaxDb" id="4097-P82446"/>
<dbReference type="Proteomes" id="UP000084051">
    <property type="component" value="Unplaced"/>
</dbReference>
<dbReference type="GO" id="GO:0005576">
    <property type="term" value="C:extracellular region"/>
    <property type="evidence" value="ECO:0007669"/>
    <property type="project" value="UniProtKB-KW"/>
</dbReference>
<organism>
    <name type="scientific">Nicotiana tabacum</name>
    <name type="common">Common tobacco</name>
    <dbReference type="NCBI Taxonomy" id="4097"/>
    <lineage>
        <taxon>Eukaryota</taxon>
        <taxon>Viridiplantae</taxon>
        <taxon>Streptophyta</taxon>
        <taxon>Embryophyta</taxon>
        <taxon>Tracheophyta</taxon>
        <taxon>Spermatophyta</taxon>
        <taxon>Magnoliopsida</taxon>
        <taxon>eudicotyledons</taxon>
        <taxon>Gunneridae</taxon>
        <taxon>Pentapetalae</taxon>
        <taxon>asterids</taxon>
        <taxon>lamiids</taxon>
        <taxon>Solanales</taxon>
        <taxon>Solanaceae</taxon>
        <taxon>Nicotianoideae</taxon>
        <taxon>Nicotianeae</taxon>
        <taxon>Nicotiana</taxon>
    </lineage>
</organism>
<reference evidence="5" key="1">
    <citation type="journal article" date="1997" name="J. Biol. Chem.">
        <title>Differential extraction and protein sequencing reveals major differences in patterns of primary cell wall proteins from plants.</title>
        <authorList>
            <person name="Robertson D."/>
            <person name="Mitchell G.P."/>
            <person name="Gilroy J.S."/>
            <person name="Gerrish C."/>
            <person name="Bolwell G.P."/>
            <person name="Slabas A.R."/>
        </authorList>
    </citation>
    <scope>PROTEIN SEQUENCE</scope>
    <scope>SUBCELLULAR LOCATION</scope>
</reference>
<reference evidence="5" key="2">
    <citation type="journal article" date="2001" name="Planta">
        <title>Proteomic analysis reveals a novel set of cell wall proteins in a transformed tobacco cell culture that synthesises secondary walls as determined by biochemical and morphological parameters.</title>
        <authorList>
            <person name="Blee K.A."/>
            <person name="Wheatley E.R."/>
            <person name="Bonham V.A."/>
            <person name="Mitchell G.P."/>
            <person name="Robertson D."/>
            <person name="Slabas A.R."/>
            <person name="Burrell M.M."/>
            <person name="Wojtaszek P."/>
            <person name="Bolwell G.P."/>
        </authorList>
    </citation>
    <scope>PROTEIN SEQUENCE</scope>
    <scope>SUBCELLULAR LOCATION</scope>
    <source>
        <strain evidence="1">cv. Petit Havana</strain>
    </source>
</reference>
<feature type="chain" id="PRO_0000079728" description="34 kDa cell wall protein">
    <location>
        <begin position="1"/>
        <end position="15" status="greater than"/>
    </location>
</feature>
<feature type="non-terminal residue" evidence="3 4">
    <location>
        <position position="15"/>
    </location>
</feature>
<sequence>WPXAQIFSAVRGXVN</sequence>